<reference key="1">
    <citation type="journal article" date="2000" name="Science">
        <title>Complete genome sequence of Neisseria meningitidis serogroup B strain MC58.</title>
        <authorList>
            <person name="Tettelin H."/>
            <person name="Saunders N.J."/>
            <person name="Heidelberg J.F."/>
            <person name="Jeffries A.C."/>
            <person name="Nelson K.E."/>
            <person name="Eisen J.A."/>
            <person name="Ketchum K.A."/>
            <person name="Hood D.W."/>
            <person name="Peden J.F."/>
            <person name="Dodson R.J."/>
            <person name="Nelson W.C."/>
            <person name="Gwinn M.L."/>
            <person name="DeBoy R.T."/>
            <person name="Peterson J.D."/>
            <person name="Hickey E.K."/>
            <person name="Haft D.H."/>
            <person name="Salzberg S.L."/>
            <person name="White O."/>
            <person name="Fleischmann R.D."/>
            <person name="Dougherty B.A."/>
            <person name="Mason T.M."/>
            <person name="Ciecko A."/>
            <person name="Parksey D.S."/>
            <person name="Blair E."/>
            <person name="Cittone H."/>
            <person name="Clark E.B."/>
            <person name="Cotton M.D."/>
            <person name="Utterback T.R."/>
            <person name="Khouri H.M."/>
            <person name="Qin H."/>
            <person name="Vamathevan J.J."/>
            <person name="Gill J."/>
            <person name="Scarlato V."/>
            <person name="Masignani V."/>
            <person name="Pizza M."/>
            <person name="Grandi G."/>
            <person name="Sun L."/>
            <person name="Smith H.O."/>
            <person name="Fraser C.M."/>
            <person name="Moxon E.R."/>
            <person name="Rappuoli R."/>
            <person name="Venter J.C."/>
        </authorList>
    </citation>
    <scope>NUCLEOTIDE SEQUENCE [LARGE SCALE GENOMIC DNA]</scope>
    <source>
        <strain>ATCC BAA-335 / MC58</strain>
    </source>
</reference>
<name>RL2_NEIMB</name>
<evidence type="ECO:0000255" key="1">
    <source>
        <dbReference type="HAMAP-Rule" id="MF_01320"/>
    </source>
</evidence>
<evidence type="ECO:0000256" key="2">
    <source>
        <dbReference type="SAM" id="MobiDB-lite"/>
    </source>
</evidence>
<evidence type="ECO:0000305" key="3"/>
<protein>
    <recommendedName>
        <fullName evidence="1">Large ribosomal subunit protein uL2</fullName>
    </recommendedName>
    <alternativeName>
        <fullName evidence="3">50S ribosomal protein L2</fullName>
    </alternativeName>
</protein>
<gene>
    <name evidence="1" type="primary">rplB</name>
    <name type="ordered locus">NMB0145</name>
</gene>
<organism>
    <name type="scientific">Neisseria meningitidis serogroup B (strain ATCC BAA-335 / MC58)</name>
    <dbReference type="NCBI Taxonomy" id="122586"/>
    <lineage>
        <taxon>Bacteria</taxon>
        <taxon>Pseudomonadati</taxon>
        <taxon>Pseudomonadota</taxon>
        <taxon>Betaproteobacteria</taxon>
        <taxon>Neisseriales</taxon>
        <taxon>Neisseriaceae</taxon>
        <taxon>Neisseria</taxon>
    </lineage>
</organism>
<sequence>MAIVKMKPTSAGRRGMVRVVTEGLYKGAPYAPLLEKKNSTAGRNNNGHITTRHKGGGHKHHYRVVDFKRNKDGIPAKVERIEYDPNRTAFIALLCYADGERRYIIAPRGIQAGAVLVSGAEAAIKVGNTLPIRNIPVGTTIHCIEMKPGKGAQIARSAGASAVLLAKEGAYAQVRLRSGEVRKINVDCRATIGEVGNEEQSLKKIGKAGANRWRGIRPTVRGVVMNPVDHPHGGGEGRTGEAREPVSPWGTPAKGYRTRNNKRTDNMIVRRRYSNKG</sequence>
<keyword id="KW-1185">Reference proteome</keyword>
<keyword id="KW-0687">Ribonucleoprotein</keyword>
<keyword id="KW-0689">Ribosomal protein</keyword>
<keyword id="KW-0694">RNA-binding</keyword>
<keyword id="KW-0699">rRNA-binding</keyword>
<feature type="chain" id="PRO_0000129589" description="Large ribosomal subunit protein uL2">
    <location>
        <begin position="1"/>
        <end position="277"/>
    </location>
</feature>
<feature type="region of interest" description="Disordered" evidence="2">
    <location>
        <begin position="37"/>
        <end position="60"/>
    </location>
</feature>
<feature type="region of interest" description="Disordered" evidence="2">
    <location>
        <begin position="223"/>
        <end position="264"/>
    </location>
</feature>
<feature type="compositionally biased region" description="Polar residues" evidence="2">
    <location>
        <begin position="39"/>
        <end position="49"/>
    </location>
</feature>
<feature type="compositionally biased region" description="Basic residues" evidence="2">
    <location>
        <begin position="50"/>
        <end position="60"/>
    </location>
</feature>
<feature type="compositionally biased region" description="Basic and acidic residues" evidence="2">
    <location>
        <begin position="229"/>
        <end position="244"/>
    </location>
</feature>
<proteinExistence type="inferred from homology"/>
<accession>Q9K1I5</accession>
<dbReference type="EMBL" id="AE002098">
    <property type="protein sequence ID" value="AAF40603.1"/>
    <property type="molecule type" value="Genomic_DNA"/>
</dbReference>
<dbReference type="PIR" id="C81231">
    <property type="entry name" value="C81231"/>
</dbReference>
<dbReference type="RefSeq" id="NP_273203.1">
    <property type="nucleotide sequence ID" value="NC_003112.2"/>
</dbReference>
<dbReference type="RefSeq" id="WP_002221850.1">
    <property type="nucleotide sequence ID" value="NC_003112.2"/>
</dbReference>
<dbReference type="SMR" id="Q9K1I5"/>
<dbReference type="FunCoup" id="Q9K1I5">
    <property type="interactions" value="678"/>
</dbReference>
<dbReference type="STRING" id="122586.NMB0145"/>
<dbReference type="PaxDb" id="122586-NMB0145"/>
<dbReference type="KEGG" id="nme:NMB0145"/>
<dbReference type="PATRIC" id="fig|122586.8.peg.186"/>
<dbReference type="HOGENOM" id="CLU_036235_2_1_4"/>
<dbReference type="InParanoid" id="Q9K1I5"/>
<dbReference type="OrthoDB" id="9778722at2"/>
<dbReference type="Proteomes" id="UP000000425">
    <property type="component" value="Chromosome"/>
</dbReference>
<dbReference type="GO" id="GO:0022625">
    <property type="term" value="C:cytosolic large ribosomal subunit"/>
    <property type="evidence" value="ECO:0000318"/>
    <property type="project" value="GO_Central"/>
</dbReference>
<dbReference type="GO" id="GO:0003723">
    <property type="term" value="F:RNA binding"/>
    <property type="evidence" value="ECO:0000318"/>
    <property type="project" value="GO_Central"/>
</dbReference>
<dbReference type="GO" id="GO:0019843">
    <property type="term" value="F:rRNA binding"/>
    <property type="evidence" value="ECO:0007669"/>
    <property type="project" value="UniProtKB-UniRule"/>
</dbReference>
<dbReference type="GO" id="GO:0003735">
    <property type="term" value="F:structural constituent of ribosome"/>
    <property type="evidence" value="ECO:0000318"/>
    <property type="project" value="GO_Central"/>
</dbReference>
<dbReference type="GO" id="GO:0016740">
    <property type="term" value="F:transferase activity"/>
    <property type="evidence" value="ECO:0007669"/>
    <property type="project" value="InterPro"/>
</dbReference>
<dbReference type="GO" id="GO:0002181">
    <property type="term" value="P:cytoplasmic translation"/>
    <property type="evidence" value="ECO:0000318"/>
    <property type="project" value="GO_Central"/>
</dbReference>
<dbReference type="FunFam" id="2.30.30.30:FF:000001">
    <property type="entry name" value="50S ribosomal protein L2"/>
    <property type="match status" value="1"/>
</dbReference>
<dbReference type="FunFam" id="2.40.50.140:FF:000003">
    <property type="entry name" value="50S ribosomal protein L2"/>
    <property type="match status" value="1"/>
</dbReference>
<dbReference type="FunFam" id="4.10.950.10:FF:000001">
    <property type="entry name" value="50S ribosomal protein L2"/>
    <property type="match status" value="1"/>
</dbReference>
<dbReference type="Gene3D" id="2.30.30.30">
    <property type="match status" value="1"/>
</dbReference>
<dbReference type="Gene3D" id="2.40.50.140">
    <property type="entry name" value="Nucleic acid-binding proteins"/>
    <property type="match status" value="1"/>
</dbReference>
<dbReference type="Gene3D" id="4.10.950.10">
    <property type="entry name" value="Ribosomal protein L2, domain 3"/>
    <property type="match status" value="1"/>
</dbReference>
<dbReference type="HAMAP" id="MF_01320_B">
    <property type="entry name" value="Ribosomal_uL2_B"/>
    <property type="match status" value="1"/>
</dbReference>
<dbReference type="InterPro" id="IPR012340">
    <property type="entry name" value="NA-bd_OB-fold"/>
</dbReference>
<dbReference type="InterPro" id="IPR014722">
    <property type="entry name" value="Rib_uL2_dom2"/>
</dbReference>
<dbReference type="InterPro" id="IPR002171">
    <property type="entry name" value="Ribosomal_uL2"/>
</dbReference>
<dbReference type="InterPro" id="IPR005880">
    <property type="entry name" value="Ribosomal_uL2_bac/org-type"/>
</dbReference>
<dbReference type="InterPro" id="IPR022669">
    <property type="entry name" value="Ribosomal_uL2_C"/>
</dbReference>
<dbReference type="InterPro" id="IPR022671">
    <property type="entry name" value="Ribosomal_uL2_CS"/>
</dbReference>
<dbReference type="InterPro" id="IPR014726">
    <property type="entry name" value="Ribosomal_uL2_dom3"/>
</dbReference>
<dbReference type="InterPro" id="IPR022666">
    <property type="entry name" value="Ribosomal_uL2_RNA-bd_dom"/>
</dbReference>
<dbReference type="InterPro" id="IPR008991">
    <property type="entry name" value="Translation_prot_SH3-like_sf"/>
</dbReference>
<dbReference type="NCBIfam" id="TIGR01171">
    <property type="entry name" value="rplB_bact"/>
    <property type="match status" value="1"/>
</dbReference>
<dbReference type="PANTHER" id="PTHR13691:SF5">
    <property type="entry name" value="LARGE RIBOSOMAL SUBUNIT PROTEIN UL2M"/>
    <property type="match status" value="1"/>
</dbReference>
<dbReference type="PANTHER" id="PTHR13691">
    <property type="entry name" value="RIBOSOMAL PROTEIN L2"/>
    <property type="match status" value="1"/>
</dbReference>
<dbReference type="Pfam" id="PF00181">
    <property type="entry name" value="Ribosomal_L2"/>
    <property type="match status" value="1"/>
</dbReference>
<dbReference type="Pfam" id="PF03947">
    <property type="entry name" value="Ribosomal_L2_C"/>
    <property type="match status" value="1"/>
</dbReference>
<dbReference type="PIRSF" id="PIRSF002158">
    <property type="entry name" value="Ribosomal_L2"/>
    <property type="match status" value="1"/>
</dbReference>
<dbReference type="SMART" id="SM01383">
    <property type="entry name" value="Ribosomal_L2"/>
    <property type="match status" value="1"/>
</dbReference>
<dbReference type="SMART" id="SM01382">
    <property type="entry name" value="Ribosomal_L2_C"/>
    <property type="match status" value="1"/>
</dbReference>
<dbReference type="SUPFAM" id="SSF50249">
    <property type="entry name" value="Nucleic acid-binding proteins"/>
    <property type="match status" value="1"/>
</dbReference>
<dbReference type="SUPFAM" id="SSF50104">
    <property type="entry name" value="Translation proteins SH3-like domain"/>
    <property type="match status" value="1"/>
</dbReference>
<dbReference type="PROSITE" id="PS00467">
    <property type="entry name" value="RIBOSOMAL_L2"/>
    <property type="match status" value="1"/>
</dbReference>
<comment type="function">
    <text evidence="1">One of the primary rRNA binding proteins. Required for association of the 30S and 50S subunits to form the 70S ribosome, for tRNA binding and peptide bond formation. It has been suggested to have peptidyltransferase activity; this is somewhat controversial. Makes several contacts with the 16S rRNA in the 70S ribosome.</text>
</comment>
<comment type="subunit">
    <text evidence="1">Part of the 50S ribosomal subunit. Forms a bridge to the 30S subunit in the 70S ribosome.</text>
</comment>
<comment type="similarity">
    <text evidence="1">Belongs to the universal ribosomal protein uL2 family.</text>
</comment>